<proteinExistence type="inferred from homology"/>
<reference key="1">
    <citation type="journal article" date="2008" name="J. Bacteriol.">
        <title>Insights into the environmental resistance gene pool from the genome sequence of the multidrug-resistant environmental isolate Escherichia coli SMS-3-5.</title>
        <authorList>
            <person name="Fricke W.F."/>
            <person name="Wright M.S."/>
            <person name="Lindell A.H."/>
            <person name="Harkins D.M."/>
            <person name="Baker-Austin C."/>
            <person name="Ravel J."/>
            <person name="Stepanauskas R."/>
        </authorList>
    </citation>
    <scope>NUCLEOTIDE SEQUENCE [LARGE SCALE GENOMIC DNA]</scope>
    <source>
        <strain>SMS-3-5 / SECEC</strain>
    </source>
</reference>
<organism>
    <name type="scientific">Escherichia coli (strain SMS-3-5 / SECEC)</name>
    <dbReference type="NCBI Taxonomy" id="439855"/>
    <lineage>
        <taxon>Bacteria</taxon>
        <taxon>Pseudomonadati</taxon>
        <taxon>Pseudomonadota</taxon>
        <taxon>Gammaproteobacteria</taxon>
        <taxon>Enterobacterales</taxon>
        <taxon>Enterobacteriaceae</taxon>
        <taxon>Escherichia</taxon>
    </lineage>
</organism>
<comment type="function">
    <text evidence="1">Member of a network of 50S ribosomal subunit biogenesis factors which assembles along the 30S-50S interface, preventing incorrect 23S rRNA structures from forming. Promotes peptidyl transferase center (PTC) maturation.</text>
</comment>
<comment type="subcellular location">
    <subcellularLocation>
        <location evidence="1">Cytoplasm</location>
    </subcellularLocation>
    <text evidence="1">Associates with late stage pre-50S ribosomal subunits.</text>
</comment>
<comment type="similarity">
    <text evidence="1">Belongs to the DarP family.</text>
</comment>
<protein>
    <recommendedName>
        <fullName evidence="1">Dual-action ribosomal maturation protein DarP</fullName>
    </recommendedName>
    <alternativeName>
        <fullName evidence="1">Large ribosomal subunit assembly factor DarP</fullName>
    </alternativeName>
</protein>
<name>DARP_ECOSM</name>
<dbReference type="EMBL" id="CP000970">
    <property type="protein sequence ID" value="ACB16534.1"/>
    <property type="molecule type" value="Genomic_DNA"/>
</dbReference>
<dbReference type="SMR" id="B1LRB8"/>
<dbReference type="KEGG" id="ecm:EcSMS35_4712"/>
<dbReference type="HOGENOM" id="CLU_106757_2_0_6"/>
<dbReference type="Proteomes" id="UP000007011">
    <property type="component" value="Chromosome"/>
</dbReference>
<dbReference type="GO" id="GO:0005829">
    <property type="term" value="C:cytosol"/>
    <property type="evidence" value="ECO:0007669"/>
    <property type="project" value="TreeGrafter"/>
</dbReference>
<dbReference type="GO" id="GO:0043022">
    <property type="term" value="F:ribosome binding"/>
    <property type="evidence" value="ECO:0007669"/>
    <property type="project" value="UniProtKB-UniRule"/>
</dbReference>
<dbReference type="GO" id="GO:0019843">
    <property type="term" value="F:rRNA binding"/>
    <property type="evidence" value="ECO:0007669"/>
    <property type="project" value="UniProtKB-UniRule"/>
</dbReference>
<dbReference type="GO" id="GO:1902626">
    <property type="term" value="P:assembly of large subunit precursor of preribosome"/>
    <property type="evidence" value="ECO:0007669"/>
    <property type="project" value="UniProtKB-UniRule"/>
</dbReference>
<dbReference type="CDD" id="cd16331">
    <property type="entry name" value="YjgA-like"/>
    <property type="match status" value="1"/>
</dbReference>
<dbReference type="FunFam" id="1.10.60.30:FF:000001">
    <property type="entry name" value="UPF0307 protein YjgA"/>
    <property type="match status" value="1"/>
</dbReference>
<dbReference type="FunFam" id="1.10.60.30:FF:000002">
    <property type="entry name" value="UPF0307 protein YjgA"/>
    <property type="match status" value="1"/>
</dbReference>
<dbReference type="Gene3D" id="1.10.60.30">
    <property type="entry name" value="PSPTO4464-like domains"/>
    <property type="match status" value="2"/>
</dbReference>
<dbReference type="HAMAP" id="MF_00765">
    <property type="entry name" value="DarP"/>
    <property type="match status" value="1"/>
</dbReference>
<dbReference type="InterPro" id="IPR006839">
    <property type="entry name" value="DarP"/>
</dbReference>
<dbReference type="InterPro" id="IPR023153">
    <property type="entry name" value="DarP_sf"/>
</dbReference>
<dbReference type="NCBIfam" id="NF003593">
    <property type="entry name" value="PRK05255.1-1"/>
    <property type="match status" value="1"/>
</dbReference>
<dbReference type="PANTHER" id="PTHR38101">
    <property type="entry name" value="UPF0307 PROTEIN YJGA"/>
    <property type="match status" value="1"/>
</dbReference>
<dbReference type="PANTHER" id="PTHR38101:SF1">
    <property type="entry name" value="UPF0307 PROTEIN YJGA"/>
    <property type="match status" value="1"/>
</dbReference>
<dbReference type="Pfam" id="PF04751">
    <property type="entry name" value="DarP"/>
    <property type="match status" value="1"/>
</dbReference>
<dbReference type="PIRSF" id="PIRSF016183">
    <property type="entry name" value="UCP016183"/>
    <property type="match status" value="1"/>
</dbReference>
<dbReference type="SUPFAM" id="SSF158710">
    <property type="entry name" value="PSPTO4464-like"/>
    <property type="match status" value="1"/>
</dbReference>
<accession>B1LRB8</accession>
<gene>
    <name evidence="1" type="primary">darP</name>
    <name type="ordered locus">EcSMS35_4712</name>
</gene>
<feature type="chain" id="PRO_1000198380" description="Dual-action ribosomal maturation protein DarP">
    <location>
        <begin position="1"/>
        <end position="183"/>
    </location>
</feature>
<evidence type="ECO:0000255" key="1">
    <source>
        <dbReference type="HAMAP-Rule" id="MF_00765"/>
    </source>
</evidence>
<keyword id="KW-0963">Cytoplasm</keyword>
<keyword id="KW-0690">Ribosome biogenesis</keyword>
<keyword id="KW-0694">RNA-binding</keyword>
<keyword id="KW-0699">rRNA-binding</keyword>
<sequence>MTKQPEDWLDDVPGDDIEDEDDEIIWVSKSEIKRDAEELKRLGAEIVDLGKNALDKIPLDADLRAAIELAQRIKMEGRRRQLQLIGKMLRQRDVEPIRQALDKLKNRHNQQVVLFHKLENLRDRLIDQGDDAIAEVLNLWPDADRQQLRTLIRNAKKEKEGNKPPKSARQIFQYLRELAENEG</sequence>